<sequence>MNSTPDTSSRPSIRALTLLEGRVLGVLVEKQHTVPDSYPLSLNALTLGCNQKTGRAPVMNATEAEVLTAVDGLKRLSLVMEGSSSRVPRFEHNMNRVLGLPSQSAALLTTLLLRGPQTAAELRLNSARLHGFADISSVEAFLDELAANDPPRVVKLARTPGERENRWTHLLCGEVSASELAQPGAEDDAVPLSAFEAVKAEQKRLADEVSRLQTVVRRMAAELGIDAGDLTAGEGA</sequence>
<protein>
    <recommendedName>
        <fullName evidence="1">UPF0502 protein Bxeno_B1639</fullName>
    </recommendedName>
</protein>
<proteinExistence type="inferred from homology"/>
<organism>
    <name type="scientific">Paraburkholderia xenovorans (strain LB400)</name>
    <dbReference type="NCBI Taxonomy" id="266265"/>
    <lineage>
        <taxon>Bacteria</taxon>
        <taxon>Pseudomonadati</taxon>
        <taxon>Pseudomonadota</taxon>
        <taxon>Betaproteobacteria</taxon>
        <taxon>Burkholderiales</taxon>
        <taxon>Burkholderiaceae</taxon>
        <taxon>Paraburkholderia</taxon>
    </lineage>
</organism>
<feature type="chain" id="PRO_0000309380" description="UPF0502 protein Bxeno_B1639">
    <location>
        <begin position="1"/>
        <end position="236"/>
    </location>
</feature>
<comment type="similarity">
    <text evidence="1">Belongs to the UPF0502 family.</text>
</comment>
<evidence type="ECO:0000255" key="1">
    <source>
        <dbReference type="HAMAP-Rule" id="MF_01584"/>
    </source>
</evidence>
<name>Y6639_PARXL</name>
<reference key="1">
    <citation type="journal article" date="2006" name="Proc. Natl. Acad. Sci. U.S.A.">
        <title>Burkholderia xenovorans LB400 harbors a multi-replicon, 9.73-Mbp genome shaped for versatility.</title>
        <authorList>
            <person name="Chain P.S.G."/>
            <person name="Denef V.J."/>
            <person name="Konstantinidis K.T."/>
            <person name="Vergez L.M."/>
            <person name="Agullo L."/>
            <person name="Reyes V.L."/>
            <person name="Hauser L."/>
            <person name="Cordova M."/>
            <person name="Gomez L."/>
            <person name="Gonzalez M."/>
            <person name="Land M."/>
            <person name="Lao V."/>
            <person name="Larimer F."/>
            <person name="LiPuma J.J."/>
            <person name="Mahenthiralingam E."/>
            <person name="Malfatti S.A."/>
            <person name="Marx C.J."/>
            <person name="Parnell J.J."/>
            <person name="Ramette A."/>
            <person name="Richardson P."/>
            <person name="Seeger M."/>
            <person name="Smith D."/>
            <person name="Spilker T."/>
            <person name="Sul W.J."/>
            <person name="Tsoi T.V."/>
            <person name="Ulrich L.E."/>
            <person name="Zhulin I.B."/>
            <person name="Tiedje J.M."/>
        </authorList>
    </citation>
    <scope>NUCLEOTIDE SEQUENCE [LARGE SCALE GENOMIC DNA]</scope>
    <source>
        <strain>LB400</strain>
    </source>
</reference>
<dbReference type="EMBL" id="CP000271">
    <property type="protein sequence ID" value="ABE34607.1"/>
    <property type="molecule type" value="Genomic_DNA"/>
</dbReference>
<dbReference type="RefSeq" id="WP_011491929.1">
    <property type="nucleotide sequence ID" value="NC_007952.1"/>
</dbReference>
<dbReference type="SMR" id="Q13MT2"/>
<dbReference type="STRING" id="266265.Bxe_B1356"/>
<dbReference type="KEGG" id="bxb:DR64_6663"/>
<dbReference type="KEGG" id="bxe:Bxe_B1356"/>
<dbReference type="PATRIC" id="fig|266265.5.peg.6400"/>
<dbReference type="eggNOG" id="COG3132">
    <property type="taxonomic scope" value="Bacteria"/>
</dbReference>
<dbReference type="OrthoDB" id="9784785at2"/>
<dbReference type="Proteomes" id="UP000001817">
    <property type="component" value="Chromosome 2"/>
</dbReference>
<dbReference type="Gene3D" id="1.10.10.10">
    <property type="entry name" value="Winged helix-like DNA-binding domain superfamily/Winged helix DNA-binding domain"/>
    <property type="match status" value="2"/>
</dbReference>
<dbReference type="HAMAP" id="MF_01584">
    <property type="entry name" value="UPF0502"/>
    <property type="match status" value="1"/>
</dbReference>
<dbReference type="InterPro" id="IPR007432">
    <property type="entry name" value="DUF480"/>
</dbReference>
<dbReference type="InterPro" id="IPR036388">
    <property type="entry name" value="WH-like_DNA-bd_sf"/>
</dbReference>
<dbReference type="InterPro" id="IPR036390">
    <property type="entry name" value="WH_DNA-bd_sf"/>
</dbReference>
<dbReference type="PANTHER" id="PTHR38768">
    <property type="entry name" value="UPF0502 PROTEIN YCEH"/>
    <property type="match status" value="1"/>
</dbReference>
<dbReference type="PANTHER" id="PTHR38768:SF1">
    <property type="entry name" value="UPF0502 PROTEIN YCEH"/>
    <property type="match status" value="1"/>
</dbReference>
<dbReference type="Pfam" id="PF04337">
    <property type="entry name" value="DUF480"/>
    <property type="match status" value="1"/>
</dbReference>
<dbReference type="SUPFAM" id="SSF46785">
    <property type="entry name" value="Winged helix' DNA-binding domain"/>
    <property type="match status" value="2"/>
</dbReference>
<keyword id="KW-1185">Reference proteome</keyword>
<accession>Q13MT2</accession>
<gene>
    <name type="ordered locus">Bxeno_B1639</name>
    <name type="ORF">Bxe_B1356</name>
</gene>